<dbReference type="EC" id="4.3.3.6" evidence="1"/>
<dbReference type="EMBL" id="AE017283">
    <property type="protein sequence ID" value="AAT82718.1"/>
    <property type="molecule type" value="Genomic_DNA"/>
</dbReference>
<dbReference type="SMR" id="Q6A948"/>
<dbReference type="EnsemblBacteria" id="AAT82718">
    <property type="protein sequence ID" value="AAT82718"/>
    <property type="gene ID" value="PPA0965"/>
</dbReference>
<dbReference type="KEGG" id="pac:PPA0965"/>
<dbReference type="eggNOG" id="COG0214">
    <property type="taxonomic scope" value="Bacteria"/>
</dbReference>
<dbReference type="HOGENOM" id="CLU_055352_1_0_11"/>
<dbReference type="UniPathway" id="UPA00245"/>
<dbReference type="Proteomes" id="UP000000603">
    <property type="component" value="Chromosome"/>
</dbReference>
<dbReference type="GO" id="GO:0036381">
    <property type="term" value="F:pyridoxal 5'-phosphate synthase (glutamine hydrolysing) activity"/>
    <property type="evidence" value="ECO:0007669"/>
    <property type="project" value="UniProtKB-UniRule"/>
</dbReference>
<dbReference type="GO" id="GO:0006520">
    <property type="term" value="P:amino acid metabolic process"/>
    <property type="evidence" value="ECO:0007669"/>
    <property type="project" value="TreeGrafter"/>
</dbReference>
<dbReference type="GO" id="GO:0042823">
    <property type="term" value="P:pyridoxal phosphate biosynthetic process"/>
    <property type="evidence" value="ECO:0007669"/>
    <property type="project" value="UniProtKB-UniRule"/>
</dbReference>
<dbReference type="GO" id="GO:0008615">
    <property type="term" value="P:pyridoxine biosynthetic process"/>
    <property type="evidence" value="ECO:0007669"/>
    <property type="project" value="TreeGrafter"/>
</dbReference>
<dbReference type="CDD" id="cd04727">
    <property type="entry name" value="pdxS"/>
    <property type="match status" value="1"/>
</dbReference>
<dbReference type="FunFam" id="3.20.20.70:FF:000001">
    <property type="entry name" value="Pyridoxine biosynthesis protein PDX1"/>
    <property type="match status" value="1"/>
</dbReference>
<dbReference type="Gene3D" id="3.20.20.70">
    <property type="entry name" value="Aldolase class I"/>
    <property type="match status" value="1"/>
</dbReference>
<dbReference type="HAMAP" id="MF_01824">
    <property type="entry name" value="PdxS"/>
    <property type="match status" value="1"/>
</dbReference>
<dbReference type="InterPro" id="IPR013785">
    <property type="entry name" value="Aldolase_TIM"/>
</dbReference>
<dbReference type="InterPro" id="IPR001852">
    <property type="entry name" value="PdxS/SNZ"/>
</dbReference>
<dbReference type="InterPro" id="IPR033755">
    <property type="entry name" value="PdxS/SNZ_N"/>
</dbReference>
<dbReference type="InterPro" id="IPR011060">
    <property type="entry name" value="RibuloseP-bd_barrel"/>
</dbReference>
<dbReference type="NCBIfam" id="NF003215">
    <property type="entry name" value="PRK04180.1"/>
    <property type="match status" value="1"/>
</dbReference>
<dbReference type="NCBIfam" id="TIGR00343">
    <property type="entry name" value="pyridoxal 5'-phosphate synthase lyase subunit PdxS"/>
    <property type="match status" value="1"/>
</dbReference>
<dbReference type="PANTHER" id="PTHR31829">
    <property type="entry name" value="PYRIDOXAL 5'-PHOSPHATE SYNTHASE SUBUNIT SNZ1-RELATED"/>
    <property type="match status" value="1"/>
</dbReference>
<dbReference type="PANTHER" id="PTHR31829:SF0">
    <property type="entry name" value="PYRIDOXAL 5'-PHOSPHATE SYNTHASE SUBUNIT SNZ1-RELATED"/>
    <property type="match status" value="1"/>
</dbReference>
<dbReference type="Pfam" id="PF01680">
    <property type="entry name" value="SOR_SNZ"/>
    <property type="match status" value="1"/>
</dbReference>
<dbReference type="PIRSF" id="PIRSF029271">
    <property type="entry name" value="Pdx1"/>
    <property type="match status" value="1"/>
</dbReference>
<dbReference type="SUPFAM" id="SSF51366">
    <property type="entry name" value="Ribulose-phoshate binding barrel"/>
    <property type="match status" value="1"/>
</dbReference>
<dbReference type="PROSITE" id="PS01235">
    <property type="entry name" value="PDXS_SNZ_1"/>
    <property type="match status" value="1"/>
</dbReference>
<dbReference type="PROSITE" id="PS51129">
    <property type="entry name" value="PDXS_SNZ_2"/>
    <property type="match status" value="1"/>
</dbReference>
<sequence>MGSMSEHIPATNSTGTTRVKRGLADMLKGGVIMDVVTPEQAKIAEDAGACAVMALERVPADIRAQGGVARMSDPDLIEGIIEAVSIPVMAKARIGHFVEAQVLESLRVDFIDESEVLSPADYANHIDKWAFGVPFVCGATNLGEALRRITEGAAMIRSKGEAGTGDVSEAVRHLRTIRAEMARLSSMSPDELYVAAKELQAPYDLVAEVARTGELPVVLFVAGGVATPADAALVMQMGAQGVFVGSGIFKSGNPAARAAAIVKATTAYDDPDTIAEVSRGLGEAMVGINVADVPAPHRLAERGW</sequence>
<name>PDXS_CUTAK</name>
<proteinExistence type="inferred from homology"/>
<keyword id="KW-0456">Lyase</keyword>
<keyword id="KW-0663">Pyridoxal phosphate</keyword>
<keyword id="KW-0704">Schiff base</keyword>
<gene>
    <name evidence="1" type="primary">pdxS</name>
    <name type="ordered locus">PPA0965</name>
</gene>
<accession>Q6A948</accession>
<comment type="function">
    <text evidence="1">Catalyzes the formation of pyridoxal 5'-phosphate from ribose 5-phosphate (RBP), glyceraldehyde 3-phosphate (G3P) and ammonia. The ammonia is provided by the PdxT subunit. Can also use ribulose 5-phosphate and dihydroxyacetone phosphate as substrates, resulting from enzyme-catalyzed isomerization of RBP and G3P, respectively.</text>
</comment>
<comment type="catalytic activity">
    <reaction evidence="1">
        <text>aldehydo-D-ribose 5-phosphate + D-glyceraldehyde 3-phosphate + L-glutamine = pyridoxal 5'-phosphate + L-glutamate + phosphate + 3 H2O + H(+)</text>
        <dbReference type="Rhea" id="RHEA:31507"/>
        <dbReference type="ChEBI" id="CHEBI:15377"/>
        <dbReference type="ChEBI" id="CHEBI:15378"/>
        <dbReference type="ChEBI" id="CHEBI:29985"/>
        <dbReference type="ChEBI" id="CHEBI:43474"/>
        <dbReference type="ChEBI" id="CHEBI:58273"/>
        <dbReference type="ChEBI" id="CHEBI:58359"/>
        <dbReference type="ChEBI" id="CHEBI:59776"/>
        <dbReference type="ChEBI" id="CHEBI:597326"/>
        <dbReference type="EC" id="4.3.3.6"/>
    </reaction>
</comment>
<comment type="pathway">
    <text evidence="1">Cofactor biosynthesis; pyridoxal 5'-phosphate biosynthesis.</text>
</comment>
<comment type="subunit">
    <text evidence="1">In the presence of PdxT, forms a dodecamer of heterodimers.</text>
</comment>
<comment type="similarity">
    <text evidence="1">Belongs to the PdxS/SNZ family.</text>
</comment>
<protein>
    <recommendedName>
        <fullName evidence="1">Pyridoxal 5'-phosphate synthase subunit PdxS</fullName>
        <shortName evidence="1">PLP synthase subunit PdxS</shortName>
        <ecNumber evidence="1">4.3.3.6</ecNumber>
    </recommendedName>
    <alternativeName>
        <fullName evidence="1">Pdx1</fullName>
    </alternativeName>
</protein>
<reference key="1">
    <citation type="journal article" date="2004" name="Science">
        <title>The complete genome sequence of Propionibacterium acnes, a commensal of human skin.</title>
        <authorList>
            <person name="Brueggemann H."/>
            <person name="Henne A."/>
            <person name="Hoster F."/>
            <person name="Liesegang H."/>
            <person name="Wiezer A."/>
            <person name="Strittmatter A."/>
            <person name="Hujer S."/>
            <person name="Duerre P."/>
            <person name="Gottschalk G."/>
        </authorList>
    </citation>
    <scope>NUCLEOTIDE SEQUENCE [LARGE SCALE GENOMIC DNA]</scope>
    <source>
        <strain>DSM 16379 / KPA171202</strain>
    </source>
</reference>
<organism>
    <name type="scientific">Cutibacterium acnes (strain DSM 16379 / KPA171202)</name>
    <name type="common">Propionibacterium acnes</name>
    <dbReference type="NCBI Taxonomy" id="267747"/>
    <lineage>
        <taxon>Bacteria</taxon>
        <taxon>Bacillati</taxon>
        <taxon>Actinomycetota</taxon>
        <taxon>Actinomycetes</taxon>
        <taxon>Propionibacteriales</taxon>
        <taxon>Propionibacteriaceae</taxon>
        <taxon>Cutibacterium</taxon>
    </lineage>
</organism>
<feature type="chain" id="PRO_0000109410" description="Pyridoxal 5'-phosphate synthase subunit PdxS">
    <location>
        <begin position="1"/>
        <end position="304"/>
    </location>
</feature>
<feature type="active site" description="Schiff-base intermediate with D-ribose 5-phosphate" evidence="1">
    <location>
        <position position="91"/>
    </location>
</feature>
<feature type="binding site" evidence="1">
    <location>
        <position position="34"/>
    </location>
    <ligand>
        <name>D-ribose 5-phosphate</name>
        <dbReference type="ChEBI" id="CHEBI:78346"/>
    </ligand>
</feature>
<feature type="binding site" evidence="1">
    <location>
        <position position="163"/>
    </location>
    <ligand>
        <name>D-ribose 5-phosphate</name>
        <dbReference type="ChEBI" id="CHEBI:78346"/>
    </ligand>
</feature>
<feature type="binding site" evidence="1">
    <location>
        <position position="175"/>
    </location>
    <ligand>
        <name>D-glyceraldehyde 3-phosphate</name>
        <dbReference type="ChEBI" id="CHEBI:59776"/>
    </ligand>
</feature>
<feature type="binding site" evidence="1">
    <location>
        <position position="224"/>
    </location>
    <ligand>
        <name>D-ribose 5-phosphate</name>
        <dbReference type="ChEBI" id="CHEBI:78346"/>
    </ligand>
</feature>
<feature type="binding site" evidence="1">
    <location>
        <begin position="245"/>
        <end position="246"/>
    </location>
    <ligand>
        <name>D-ribose 5-phosphate</name>
        <dbReference type="ChEBI" id="CHEBI:78346"/>
    </ligand>
</feature>
<evidence type="ECO:0000255" key="1">
    <source>
        <dbReference type="HAMAP-Rule" id="MF_01824"/>
    </source>
</evidence>